<protein>
    <recommendedName>
        <fullName>Precorrin-8X methylmutase</fullName>
        <ecNumber>5.4.99.61</ecNumber>
    </recommendedName>
    <alternativeName>
        <fullName>HBA synthase</fullName>
    </alternativeName>
    <alternativeName>
        <fullName>Precorrin isomerase</fullName>
    </alternativeName>
</protein>
<comment type="function">
    <text evidence="1">Catalyzes the conversion of precorrin-8X to hydrogenobyrinate.</text>
</comment>
<comment type="catalytic activity">
    <reaction>
        <text>precorrin-8X + 3 H(+) = hydrogenobyrinate</text>
        <dbReference type="Rhea" id="RHEA:22512"/>
        <dbReference type="ChEBI" id="CHEBI:15378"/>
        <dbReference type="ChEBI" id="CHEBI:58581"/>
        <dbReference type="ChEBI" id="CHEBI:77873"/>
        <dbReference type="EC" id="5.4.99.61"/>
    </reaction>
</comment>
<comment type="pathway">
    <text>Cofactor biosynthesis; adenosylcobalamin biosynthesis; cob(II)yrinate a,c-diamide from precorrin-2 (aerobic route): step 8/10.</text>
</comment>
<comment type="subunit">
    <text evidence="1">Homodimer.</text>
</comment>
<comment type="similarity">
    <text evidence="2">Belongs to the CobH/CbiC family.</text>
</comment>
<gene>
    <name type="primary">cobH</name>
    <name type="ordered locus">PA2905</name>
</gene>
<name>COBH_PSEAE</name>
<proteinExistence type="inferred from homology"/>
<sequence>MIDYIRDGQAIYRQSFATIRAEANLAGIPADLEKLAVRVIHACGMVDVVDDLRFSPGAGAAGRAALAAGAAILCDARMVAEGVTRSRLPAANRVICTLNEADVPALATELGNTRSAVALEHWREHLEGSVVVIGNAPTALFYLLEMLDAGAPKPALILGFPVGFVGAAESKEMLAADSRGVPYVIVRGRRGGSAMAAAAVNALATERE</sequence>
<reference key="1">
    <citation type="journal article" date="2000" name="Nature">
        <title>Complete genome sequence of Pseudomonas aeruginosa PAO1, an opportunistic pathogen.</title>
        <authorList>
            <person name="Stover C.K."/>
            <person name="Pham X.-Q.T."/>
            <person name="Erwin A.L."/>
            <person name="Mizoguchi S.D."/>
            <person name="Warrener P."/>
            <person name="Hickey M.J."/>
            <person name="Brinkman F.S.L."/>
            <person name="Hufnagle W.O."/>
            <person name="Kowalik D.J."/>
            <person name="Lagrou M."/>
            <person name="Garber R.L."/>
            <person name="Goltry L."/>
            <person name="Tolentino E."/>
            <person name="Westbrock-Wadman S."/>
            <person name="Yuan Y."/>
            <person name="Brody L.L."/>
            <person name="Coulter S.N."/>
            <person name="Folger K.R."/>
            <person name="Kas A."/>
            <person name="Larbig K."/>
            <person name="Lim R.M."/>
            <person name="Smith K.A."/>
            <person name="Spencer D.H."/>
            <person name="Wong G.K.-S."/>
            <person name="Wu Z."/>
            <person name="Paulsen I.T."/>
            <person name="Reizer J."/>
            <person name="Saier M.H. Jr."/>
            <person name="Hancock R.E.W."/>
            <person name="Lory S."/>
            <person name="Olson M.V."/>
        </authorList>
    </citation>
    <scope>NUCLEOTIDE SEQUENCE [LARGE SCALE GENOMIC DNA]</scope>
    <source>
        <strain>ATCC 15692 / DSM 22644 / CIP 104116 / JCM 14847 / LMG 12228 / 1C / PRS 101 / PAO1</strain>
    </source>
</reference>
<accession>Q9HZU2</accession>
<evidence type="ECO:0000250" key="1"/>
<evidence type="ECO:0000305" key="2"/>
<feature type="chain" id="PRO_0000287754" description="Precorrin-8X methylmutase">
    <location>
        <begin position="1"/>
        <end position="208"/>
    </location>
</feature>
<feature type="active site" description="Proton donor/acceptor" evidence="1">
    <location>
        <position position="41"/>
    </location>
</feature>
<feature type="binding site" evidence="1">
    <location>
        <position position="15"/>
    </location>
    <ligand>
        <name>substrate</name>
    </ligand>
</feature>
<feature type="binding site" evidence="1">
    <location>
        <position position="38"/>
    </location>
    <ligand>
        <name>substrate</name>
    </ligand>
</feature>
<keyword id="KW-0169">Cobalamin biosynthesis</keyword>
<keyword id="KW-0413">Isomerase</keyword>
<keyword id="KW-1185">Reference proteome</keyword>
<dbReference type="EC" id="5.4.99.61"/>
<dbReference type="EMBL" id="AE004091">
    <property type="protein sequence ID" value="AAG06293.1"/>
    <property type="molecule type" value="Genomic_DNA"/>
</dbReference>
<dbReference type="PIR" id="H83283">
    <property type="entry name" value="H83283"/>
</dbReference>
<dbReference type="RefSeq" id="NP_251595.1">
    <property type="nucleotide sequence ID" value="NC_002516.2"/>
</dbReference>
<dbReference type="RefSeq" id="WP_003107929.1">
    <property type="nucleotide sequence ID" value="NZ_QZGE01000009.1"/>
</dbReference>
<dbReference type="SMR" id="Q9HZU2"/>
<dbReference type="STRING" id="208964.PA2905"/>
<dbReference type="PaxDb" id="208964-PA2905"/>
<dbReference type="DNASU" id="882689"/>
<dbReference type="GeneID" id="882689"/>
<dbReference type="KEGG" id="pae:PA2905"/>
<dbReference type="PATRIC" id="fig|208964.12.peg.3046"/>
<dbReference type="PseudoCAP" id="PA2905"/>
<dbReference type="HOGENOM" id="CLU_084703_0_0_6"/>
<dbReference type="InParanoid" id="Q9HZU2"/>
<dbReference type="OrthoDB" id="9780708at2"/>
<dbReference type="PhylomeDB" id="Q9HZU2"/>
<dbReference type="BioCyc" id="PAER208964:G1FZ6-2955-MONOMER"/>
<dbReference type="UniPathway" id="UPA00148">
    <property type="reaction ID" value="UER00219"/>
</dbReference>
<dbReference type="Proteomes" id="UP000002438">
    <property type="component" value="Chromosome"/>
</dbReference>
<dbReference type="GO" id="GO:0016993">
    <property type="term" value="F:precorrin-8X methylmutase activity"/>
    <property type="evidence" value="ECO:0007669"/>
    <property type="project" value="UniProtKB-EC"/>
</dbReference>
<dbReference type="GO" id="GO:0009236">
    <property type="term" value="P:cobalamin biosynthetic process"/>
    <property type="evidence" value="ECO:0007669"/>
    <property type="project" value="UniProtKB-UniPathway"/>
</dbReference>
<dbReference type="Gene3D" id="3.40.50.10230">
    <property type="entry name" value="Cobalamin biosynthesis CobH/CbiC, precorrin-8X methylmutase"/>
    <property type="match status" value="1"/>
</dbReference>
<dbReference type="InterPro" id="IPR003722">
    <property type="entry name" value="Cbl_synth_CobH/CbiC"/>
</dbReference>
<dbReference type="InterPro" id="IPR036588">
    <property type="entry name" value="CobH/CbiC_sf"/>
</dbReference>
<dbReference type="NCBIfam" id="NF006136">
    <property type="entry name" value="PRK08285.1"/>
    <property type="match status" value="1"/>
</dbReference>
<dbReference type="PANTHER" id="PTHR43588">
    <property type="entry name" value="COBALT-PRECORRIN-8 METHYLMUTASE"/>
    <property type="match status" value="1"/>
</dbReference>
<dbReference type="PANTHER" id="PTHR43588:SF1">
    <property type="entry name" value="COBALT-PRECORRIN-8 METHYLMUTASE"/>
    <property type="match status" value="1"/>
</dbReference>
<dbReference type="Pfam" id="PF02570">
    <property type="entry name" value="CbiC"/>
    <property type="match status" value="1"/>
</dbReference>
<dbReference type="SUPFAM" id="SSF63965">
    <property type="entry name" value="Precorrin-8X methylmutase CbiC/CobH"/>
    <property type="match status" value="1"/>
</dbReference>
<organism>
    <name type="scientific">Pseudomonas aeruginosa (strain ATCC 15692 / DSM 22644 / CIP 104116 / JCM 14847 / LMG 12228 / 1C / PRS 101 / PAO1)</name>
    <dbReference type="NCBI Taxonomy" id="208964"/>
    <lineage>
        <taxon>Bacteria</taxon>
        <taxon>Pseudomonadati</taxon>
        <taxon>Pseudomonadota</taxon>
        <taxon>Gammaproteobacteria</taxon>
        <taxon>Pseudomonadales</taxon>
        <taxon>Pseudomonadaceae</taxon>
        <taxon>Pseudomonas</taxon>
    </lineage>
</organism>